<protein>
    <recommendedName>
        <fullName evidence="1">Small ribosomal subunit protein bS21</fullName>
    </recommendedName>
    <alternativeName>
        <fullName evidence="2">30S ribosomal protein S21</fullName>
    </alternativeName>
</protein>
<evidence type="ECO:0000255" key="1">
    <source>
        <dbReference type="HAMAP-Rule" id="MF_00358"/>
    </source>
</evidence>
<evidence type="ECO:0000305" key="2"/>
<name>RS21_BUCAT</name>
<organism>
    <name type="scientific">Buchnera aphidicola subsp. Acyrthosiphon pisum (strain Tuc7)</name>
    <dbReference type="NCBI Taxonomy" id="561501"/>
    <lineage>
        <taxon>Bacteria</taxon>
        <taxon>Pseudomonadati</taxon>
        <taxon>Pseudomonadota</taxon>
        <taxon>Gammaproteobacteria</taxon>
        <taxon>Enterobacterales</taxon>
        <taxon>Erwiniaceae</taxon>
        <taxon>Buchnera</taxon>
    </lineage>
</organism>
<accession>B8D6W9</accession>
<feature type="chain" id="PRO_1000194284" description="Small ribosomal subunit protein bS21">
    <location>
        <begin position="1"/>
        <end position="71"/>
    </location>
</feature>
<comment type="similarity">
    <text evidence="1">Belongs to the bacterial ribosomal protein bS21 family.</text>
</comment>
<sequence>MPIIKVRENEPFDVALRRFKRSCEKAGILAEIRRREFYEKPTTERKRAKASAVKRLAKKLTRENARRIRMY</sequence>
<gene>
    <name evidence="1" type="primary">rpsU</name>
    <name type="ordered locus">BUAPTUC7_057</name>
</gene>
<keyword id="KW-0687">Ribonucleoprotein</keyword>
<keyword id="KW-0689">Ribosomal protein</keyword>
<dbReference type="EMBL" id="CP001158">
    <property type="protein sequence ID" value="ACL29884.1"/>
    <property type="molecule type" value="Genomic_DNA"/>
</dbReference>
<dbReference type="RefSeq" id="WP_009874014.1">
    <property type="nucleotide sequence ID" value="NC_011834.1"/>
</dbReference>
<dbReference type="SMR" id="B8D6W9"/>
<dbReference type="KEGG" id="bau:BUAPTUC7_057"/>
<dbReference type="HOGENOM" id="CLU_159258_1_0_6"/>
<dbReference type="GO" id="GO:1990904">
    <property type="term" value="C:ribonucleoprotein complex"/>
    <property type="evidence" value="ECO:0007669"/>
    <property type="project" value="UniProtKB-KW"/>
</dbReference>
<dbReference type="GO" id="GO:0005840">
    <property type="term" value="C:ribosome"/>
    <property type="evidence" value="ECO:0007669"/>
    <property type="project" value="UniProtKB-KW"/>
</dbReference>
<dbReference type="GO" id="GO:0003735">
    <property type="term" value="F:structural constituent of ribosome"/>
    <property type="evidence" value="ECO:0007669"/>
    <property type="project" value="InterPro"/>
</dbReference>
<dbReference type="GO" id="GO:0006412">
    <property type="term" value="P:translation"/>
    <property type="evidence" value="ECO:0007669"/>
    <property type="project" value="UniProtKB-UniRule"/>
</dbReference>
<dbReference type="FunFam" id="1.20.5.1150:FF:000001">
    <property type="entry name" value="30S ribosomal protein S21"/>
    <property type="match status" value="1"/>
</dbReference>
<dbReference type="Gene3D" id="1.20.5.1150">
    <property type="entry name" value="Ribosomal protein S8"/>
    <property type="match status" value="1"/>
</dbReference>
<dbReference type="HAMAP" id="MF_00358">
    <property type="entry name" value="Ribosomal_bS21"/>
    <property type="match status" value="1"/>
</dbReference>
<dbReference type="InterPro" id="IPR001911">
    <property type="entry name" value="Ribosomal_bS21"/>
</dbReference>
<dbReference type="InterPro" id="IPR018278">
    <property type="entry name" value="Ribosomal_bS21_CS"/>
</dbReference>
<dbReference type="InterPro" id="IPR038380">
    <property type="entry name" value="Ribosomal_bS21_sf"/>
</dbReference>
<dbReference type="NCBIfam" id="TIGR00030">
    <property type="entry name" value="S21p"/>
    <property type="match status" value="1"/>
</dbReference>
<dbReference type="PANTHER" id="PTHR21109">
    <property type="entry name" value="MITOCHONDRIAL 28S RIBOSOMAL PROTEIN S21"/>
    <property type="match status" value="1"/>
</dbReference>
<dbReference type="PANTHER" id="PTHR21109:SF22">
    <property type="entry name" value="SMALL RIBOSOMAL SUBUNIT PROTEIN BS21"/>
    <property type="match status" value="1"/>
</dbReference>
<dbReference type="Pfam" id="PF01165">
    <property type="entry name" value="Ribosomal_S21"/>
    <property type="match status" value="1"/>
</dbReference>
<dbReference type="PRINTS" id="PR00976">
    <property type="entry name" value="RIBOSOMALS21"/>
</dbReference>
<dbReference type="PROSITE" id="PS01181">
    <property type="entry name" value="RIBOSOMAL_S21"/>
    <property type="match status" value="1"/>
</dbReference>
<reference key="1">
    <citation type="journal article" date="2009" name="Science">
        <title>The dynamics and time scale of ongoing genomic erosion in symbiotic bacteria.</title>
        <authorList>
            <person name="Moran N.A."/>
            <person name="McLaughlin H.J."/>
            <person name="Sorek R."/>
        </authorList>
    </citation>
    <scope>NUCLEOTIDE SEQUENCE [LARGE SCALE GENOMIC DNA]</scope>
    <source>
        <strain>Tuc7</strain>
    </source>
</reference>
<proteinExistence type="inferred from homology"/>